<reference key="1">
    <citation type="journal article" date="2005" name="Science">
        <title>The transcriptional landscape of the mammalian genome.</title>
        <authorList>
            <person name="Carninci P."/>
            <person name="Kasukawa T."/>
            <person name="Katayama S."/>
            <person name="Gough J."/>
            <person name="Frith M.C."/>
            <person name="Maeda N."/>
            <person name="Oyama R."/>
            <person name="Ravasi T."/>
            <person name="Lenhard B."/>
            <person name="Wells C."/>
            <person name="Kodzius R."/>
            <person name="Shimokawa K."/>
            <person name="Bajic V.B."/>
            <person name="Brenner S.E."/>
            <person name="Batalov S."/>
            <person name="Forrest A.R."/>
            <person name="Zavolan M."/>
            <person name="Davis M.J."/>
            <person name="Wilming L.G."/>
            <person name="Aidinis V."/>
            <person name="Allen J.E."/>
            <person name="Ambesi-Impiombato A."/>
            <person name="Apweiler R."/>
            <person name="Aturaliya R.N."/>
            <person name="Bailey T.L."/>
            <person name="Bansal M."/>
            <person name="Baxter L."/>
            <person name="Beisel K.W."/>
            <person name="Bersano T."/>
            <person name="Bono H."/>
            <person name="Chalk A.M."/>
            <person name="Chiu K.P."/>
            <person name="Choudhary V."/>
            <person name="Christoffels A."/>
            <person name="Clutterbuck D.R."/>
            <person name="Crowe M.L."/>
            <person name="Dalla E."/>
            <person name="Dalrymple B.P."/>
            <person name="de Bono B."/>
            <person name="Della Gatta G."/>
            <person name="di Bernardo D."/>
            <person name="Down T."/>
            <person name="Engstrom P."/>
            <person name="Fagiolini M."/>
            <person name="Faulkner G."/>
            <person name="Fletcher C.F."/>
            <person name="Fukushima T."/>
            <person name="Furuno M."/>
            <person name="Futaki S."/>
            <person name="Gariboldi M."/>
            <person name="Georgii-Hemming P."/>
            <person name="Gingeras T.R."/>
            <person name="Gojobori T."/>
            <person name="Green R.E."/>
            <person name="Gustincich S."/>
            <person name="Harbers M."/>
            <person name="Hayashi Y."/>
            <person name="Hensch T.K."/>
            <person name="Hirokawa N."/>
            <person name="Hill D."/>
            <person name="Huminiecki L."/>
            <person name="Iacono M."/>
            <person name="Ikeo K."/>
            <person name="Iwama A."/>
            <person name="Ishikawa T."/>
            <person name="Jakt M."/>
            <person name="Kanapin A."/>
            <person name="Katoh M."/>
            <person name="Kawasawa Y."/>
            <person name="Kelso J."/>
            <person name="Kitamura H."/>
            <person name="Kitano H."/>
            <person name="Kollias G."/>
            <person name="Krishnan S.P."/>
            <person name="Kruger A."/>
            <person name="Kummerfeld S.K."/>
            <person name="Kurochkin I.V."/>
            <person name="Lareau L.F."/>
            <person name="Lazarevic D."/>
            <person name="Lipovich L."/>
            <person name="Liu J."/>
            <person name="Liuni S."/>
            <person name="McWilliam S."/>
            <person name="Madan Babu M."/>
            <person name="Madera M."/>
            <person name="Marchionni L."/>
            <person name="Matsuda H."/>
            <person name="Matsuzawa S."/>
            <person name="Miki H."/>
            <person name="Mignone F."/>
            <person name="Miyake S."/>
            <person name="Morris K."/>
            <person name="Mottagui-Tabar S."/>
            <person name="Mulder N."/>
            <person name="Nakano N."/>
            <person name="Nakauchi H."/>
            <person name="Ng P."/>
            <person name="Nilsson R."/>
            <person name="Nishiguchi S."/>
            <person name="Nishikawa S."/>
            <person name="Nori F."/>
            <person name="Ohara O."/>
            <person name="Okazaki Y."/>
            <person name="Orlando V."/>
            <person name="Pang K.C."/>
            <person name="Pavan W.J."/>
            <person name="Pavesi G."/>
            <person name="Pesole G."/>
            <person name="Petrovsky N."/>
            <person name="Piazza S."/>
            <person name="Reed J."/>
            <person name="Reid J.F."/>
            <person name="Ring B.Z."/>
            <person name="Ringwald M."/>
            <person name="Rost B."/>
            <person name="Ruan Y."/>
            <person name="Salzberg S.L."/>
            <person name="Sandelin A."/>
            <person name="Schneider C."/>
            <person name="Schoenbach C."/>
            <person name="Sekiguchi K."/>
            <person name="Semple C.A."/>
            <person name="Seno S."/>
            <person name="Sessa L."/>
            <person name="Sheng Y."/>
            <person name="Shibata Y."/>
            <person name="Shimada H."/>
            <person name="Shimada K."/>
            <person name="Silva D."/>
            <person name="Sinclair B."/>
            <person name="Sperling S."/>
            <person name="Stupka E."/>
            <person name="Sugiura K."/>
            <person name="Sultana R."/>
            <person name="Takenaka Y."/>
            <person name="Taki K."/>
            <person name="Tammoja K."/>
            <person name="Tan S.L."/>
            <person name="Tang S."/>
            <person name="Taylor M.S."/>
            <person name="Tegner J."/>
            <person name="Teichmann S.A."/>
            <person name="Ueda H.R."/>
            <person name="van Nimwegen E."/>
            <person name="Verardo R."/>
            <person name="Wei C.L."/>
            <person name="Yagi K."/>
            <person name="Yamanishi H."/>
            <person name="Zabarovsky E."/>
            <person name="Zhu S."/>
            <person name="Zimmer A."/>
            <person name="Hide W."/>
            <person name="Bult C."/>
            <person name="Grimmond S.M."/>
            <person name="Teasdale R.D."/>
            <person name="Liu E.T."/>
            <person name="Brusic V."/>
            <person name="Quackenbush J."/>
            <person name="Wahlestedt C."/>
            <person name="Mattick J.S."/>
            <person name="Hume D.A."/>
            <person name="Kai C."/>
            <person name="Sasaki D."/>
            <person name="Tomaru Y."/>
            <person name="Fukuda S."/>
            <person name="Kanamori-Katayama M."/>
            <person name="Suzuki M."/>
            <person name="Aoki J."/>
            <person name="Arakawa T."/>
            <person name="Iida J."/>
            <person name="Imamura K."/>
            <person name="Itoh M."/>
            <person name="Kato T."/>
            <person name="Kawaji H."/>
            <person name="Kawagashira N."/>
            <person name="Kawashima T."/>
            <person name="Kojima M."/>
            <person name="Kondo S."/>
            <person name="Konno H."/>
            <person name="Nakano K."/>
            <person name="Ninomiya N."/>
            <person name="Nishio T."/>
            <person name="Okada M."/>
            <person name="Plessy C."/>
            <person name="Shibata K."/>
            <person name="Shiraki T."/>
            <person name="Suzuki S."/>
            <person name="Tagami M."/>
            <person name="Waki K."/>
            <person name="Watahiki A."/>
            <person name="Okamura-Oho Y."/>
            <person name="Suzuki H."/>
            <person name="Kawai J."/>
            <person name="Hayashizaki Y."/>
        </authorList>
    </citation>
    <scope>NUCLEOTIDE SEQUENCE [LARGE SCALE MRNA]</scope>
    <source>
        <strain>C57BL/6J</strain>
        <tissue>Embryo</tissue>
    </source>
</reference>
<reference key="2">
    <citation type="journal article" date="2004" name="Genome Res.">
        <title>The status, quality, and expansion of the NIH full-length cDNA project: the Mammalian Gene Collection (MGC).</title>
        <authorList>
            <consortium name="The MGC Project Team"/>
        </authorList>
    </citation>
    <scope>NUCLEOTIDE SEQUENCE [LARGE SCALE MRNA]</scope>
    <source>
        <tissue>Brain</tissue>
    </source>
</reference>
<reference key="3">
    <citation type="journal article" date="2010" name="Cell">
        <title>A tissue-specific atlas of mouse protein phosphorylation and expression.</title>
        <authorList>
            <person name="Huttlin E.L."/>
            <person name="Jedrychowski M.P."/>
            <person name="Elias J.E."/>
            <person name="Goswami T."/>
            <person name="Rad R."/>
            <person name="Beausoleil S.A."/>
            <person name="Villen J."/>
            <person name="Haas W."/>
            <person name="Sowa M.E."/>
            <person name="Gygi S.P."/>
        </authorList>
    </citation>
    <scope>IDENTIFICATION BY MASS SPECTROMETRY [LARGE SCALE ANALYSIS]</scope>
    <source>
        <tissue>Brown adipose tissue</tissue>
        <tissue>Heart</tissue>
        <tissue>Liver</tissue>
        <tissue>Spleen</tissue>
    </source>
</reference>
<organism>
    <name type="scientific">Mus musculus</name>
    <name type="common">Mouse</name>
    <dbReference type="NCBI Taxonomy" id="10090"/>
    <lineage>
        <taxon>Eukaryota</taxon>
        <taxon>Metazoa</taxon>
        <taxon>Chordata</taxon>
        <taxon>Craniata</taxon>
        <taxon>Vertebrata</taxon>
        <taxon>Euteleostomi</taxon>
        <taxon>Mammalia</taxon>
        <taxon>Eutheria</taxon>
        <taxon>Euarchontoglires</taxon>
        <taxon>Glires</taxon>
        <taxon>Rodentia</taxon>
        <taxon>Myomorpha</taxon>
        <taxon>Muroidea</taxon>
        <taxon>Muridae</taxon>
        <taxon>Murinae</taxon>
        <taxon>Mus</taxon>
        <taxon>Mus</taxon>
    </lineage>
</organism>
<name>T126B_MOUSE</name>
<comment type="function">
    <text evidence="2">As part of the MCIA complex, involved in the assembly of the mitochondrial complex I. Participates in constructing the membrane arm of complex I.</text>
</comment>
<comment type="subunit">
    <text evidence="2">Part of the mitochondrial complex I assembly/MCIA complex that comprises at least the core subunits TMEM126B, NDUFAF1, ECSIT and ACAD9 and complement subunits such as COA1 and TMEM186. Associates with the intermediate 370 kDa subcomplex of incompletely assembled complex I. Interacts with TMEM70 (By similarity).</text>
</comment>
<comment type="subcellular location">
    <subcellularLocation>
        <location evidence="1">Mitochondrion membrane</location>
        <topology evidence="1">Multi-pass membrane protein</topology>
    </subcellularLocation>
</comment>
<comment type="similarity">
    <text evidence="4">Belongs to the TMEM126 family.</text>
</comment>
<feature type="chain" id="PRO_0000280717" description="Complex I assembly factor TMEM126B, mitochondrial">
    <location>
        <begin position="1"/>
        <end position="230"/>
    </location>
</feature>
<feature type="transmembrane region" description="Helical" evidence="3">
    <location>
        <begin position="70"/>
        <end position="92"/>
    </location>
</feature>
<feature type="transmembrane region" description="Helical" evidence="3">
    <location>
        <begin position="107"/>
        <end position="126"/>
    </location>
</feature>
<feature type="transmembrane region" description="Helical" evidence="3">
    <location>
        <begin position="139"/>
        <end position="161"/>
    </location>
</feature>
<feature type="transmembrane region" description="Helical" evidence="3">
    <location>
        <begin position="196"/>
        <end position="218"/>
    </location>
</feature>
<dbReference type="EMBL" id="AK003201">
    <property type="protein sequence ID" value="BAB22637.1"/>
    <property type="molecule type" value="mRNA"/>
</dbReference>
<dbReference type="EMBL" id="BC049680">
    <property type="protein sequence ID" value="AAH49680.1"/>
    <property type="molecule type" value="mRNA"/>
</dbReference>
<dbReference type="CCDS" id="CCDS21448.1"/>
<dbReference type="RefSeq" id="NP_081010.1">
    <property type="nucleotide sequence ID" value="NM_026734.2"/>
</dbReference>
<dbReference type="FunCoup" id="Q9D1R1">
    <property type="interactions" value="1180"/>
</dbReference>
<dbReference type="STRING" id="10090.ENSMUSP00000032843"/>
<dbReference type="PhosphoSitePlus" id="Q9D1R1"/>
<dbReference type="SwissPalm" id="Q9D1R1"/>
<dbReference type="jPOST" id="Q9D1R1"/>
<dbReference type="PaxDb" id="10090-ENSMUSP00000032843"/>
<dbReference type="PeptideAtlas" id="Q9D1R1"/>
<dbReference type="ProteomicsDB" id="253456"/>
<dbReference type="Pumba" id="Q9D1R1"/>
<dbReference type="Antibodypedia" id="17580">
    <property type="antibodies" value="57 antibodies from 12 providers"/>
</dbReference>
<dbReference type="DNASU" id="68472"/>
<dbReference type="Ensembl" id="ENSMUST00000032843.9">
    <property type="protein sequence ID" value="ENSMUSP00000032843.8"/>
    <property type="gene ID" value="ENSMUSG00000030614.9"/>
</dbReference>
<dbReference type="GeneID" id="68472"/>
<dbReference type="KEGG" id="mmu:68472"/>
<dbReference type="UCSC" id="uc009ihp.1">
    <property type="organism name" value="mouse"/>
</dbReference>
<dbReference type="AGR" id="MGI:1915722"/>
<dbReference type="CTD" id="55863"/>
<dbReference type="MGI" id="MGI:1915722">
    <property type="gene designation" value="Tmem126b"/>
</dbReference>
<dbReference type="VEuPathDB" id="HostDB:ENSMUSG00000030614"/>
<dbReference type="eggNOG" id="ENOG502SQEZ">
    <property type="taxonomic scope" value="Eukaryota"/>
</dbReference>
<dbReference type="GeneTree" id="ENSGT00520000055616"/>
<dbReference type="HOGENOM" id="CLU_105475_0_0_1"/>
<dbReference type="InParanoid" id="Q9D1R1"/>
<dbReference type="OMA" id="QHYARFE"/>
<dbReference type="OrthoDB" id="6234762at2759"/>
<dbReference type="PhylomeDB" id="Q9D1R1"/>
<dbReference type="TreeFam" id="TF327069"/>
<dbReference type="Reactome" id="R-MMU-6799198">
    <property type="pathway name" value="Complex I biogenesis"/>
</dbReference>
<dbReference type="BioGRID-ORCS" id="68472">
    <property type="hits" value="9 hits in 77 CRISPR screens"/>
</dbReference>
<dbReference type="ChiTaRS" id="Tmem126b">
    <property type="organism name" value="mouse"/>
</dbReference>
<dbReference type="PRO" id="PR:Q9D1R1"/>
<dbReference type="Proteomes" id="UP000000589">
    <property type="component" value="Chromosome 7"/>
</dbReference>
<dbReference type="RNAct" id="Q9D1R1">
    <property type="molecule type" value="protein"/>
</dbReference>
<dbReference type="Bgee" id="ENSMUSG00000030614">
    <property type="expression patterns" value="Expressed in interventricular septum and 213 other cell types or tissues"/>
</dbReference>
<dbReference type="GO" id="GO:0031966">
    <property type="term" value="C:mitochondrial membrane"/>
    <property type="evidence" value="ECO:0007669"/>
    <property type="project" value="UniProtKB-SubCell"/>
</dbReference>
<dbReference type="GO" id="GO:0032981">
    <property type="term" value="P:mitochondrial respiratory chain complex I assembly"/>
    <property type="evidence" value="ECO:0007669"/>
    <property type="project" value="Ensembl"/>
</dbReference>
<dbReference type="GO" id="GO:0007005">
    <property type="term" value="P:mitochondrion organization"/>
    <property type="evidence" value="ECO:0000315"/>
    <property type="project" value="MGI"/>
</dbReference>
<dbReference type="GO" id="GO:0032094">
    <property type="term" value="P:response to food"/>
    <property type="evidence" value="ECO:0000315"/>
    <property type="project" value="MGI"/>
</dbReference>
<dbReference type="InterPro" id="IPR009801">
    <property type="entry name" value="TMEM126"/>
</dbReference>
<dbReference type="PANTHER" id="PTHR16296:SF3">
    <property type="entry name" value="COMPLEX I ASSEMBLY FACTOR TMEM126B, MITOCHONDRIAL"/>
    <property type="match status" value="1"/>
</dbReference>
<dbReference type="PANTHER" id="PTHR16296">
    <property type="entry name" value="UNCHARACTERIZED HYPOTHALAMUS PROTEIN HT007"/>
    <property type="match status" value="1"/>
</dbReference>
<dbReference type="Pfam" id="PF07114">
    <property type="entry name" value="TMEM126"/>
    <property type="match status" value="1"/>
</dbReference>
<keyword id="KW-0143">Chaperone</keyword>
<keyword id="KW-0472">Membrane</keyword>
<keyword id="KW-0496">Mitochondrion</keyword>
<keyword id="KW-1185">Reference proteome</keyword>
<keyword id="KW-0812">Transmembrane</keyword>
<keyword id="KW-1133">Transmembrane helix</keyword>
<accession>Q9D1R1</accession>
<sequence length="230" mass="25444">MAASQRPSWSESKVAGVVQEGNREAPQDIKMALYKHGQLIPSLGDAKFRSPIISEIIEKKFEHYRNDKTLNIHGTLVFGTSSSLSGIMANLVFRNSFKVKYEALKTYASLTTLPVLATIVSYKLFVTDALQSGDISKESCVLRSALIGMACGVSYPSALAFYKNGRLAVKYQTVPLPPKGRVMLHWLLLCQTGMKAMAIPLFFQIVMGAFTGLHHYNICEKPRARLVPDD</sequence>
<protein>
    <recommendedName>
        <fullName evidence="4">Complex I assembly factor TMEM126B, mitochondrial</fullName>
    </recommendedName>
    <alternativeName>
        <fullName>Transmembrane protein 126B</fullName>
    </alternativeName>
</protein>
<evidence type="ECO:0000250" key="1"/>
<evidence type="ECO:0000250" key="2">
    <source>
        <dbReference type="UniProtKB" id="Q8IUX1"/>
    </source>
</evidence>
<evidence type="ECO:0000255" key="3"/>
<evidence type="ECO:0000305" key="4"/>
<evidence type="ECO:0000312" key="5">
    <source>
        <dbReference type="MGI" id="MGI:1915722"/>
    </source>
</evidence>
<gene>
    <name evidence="5" type="primary">Tmem126b</name>
</gene>
<proteinExistence type="evidence at protein level"/>